<feature type="chain" id="PRO_0000182092" description="UDP-N-acetylmuramate--L-alanine ligase">
    <location>
        <begin position="1"/>
        <end position="445"/>
    </location>
</feature>
<feature type="binding site" evidence="1">
    <location>
        <begin position="113"/>
        <end position="119"/>
    </location>
    <ligand>
        <name>ATP</name>
        <dbReference type="ChEBI" id="CHEBI:30616"/>
    </ligand>
</feature>
<comment type="function">
    <text evidence="1">Cell wall formation.</text>
</comment>
<comment type="catalytic activity">
    <reaction evidence="1">
        <text>UDP-N-acetyl-alpha-D-muramate + L-alanine + ATP = UDP-N-acetyl-alpha-D-muramoyl-L-alanine + ADP + phosphate + H(+)</text>
        <dbReference type="Rhea" id="RHEA:23372"/>
        <dbReference type="ChEBI" id="CHEBI:15378"/>
        <dbReference type="ChEBI" id="CHEBI:30616"/>
        <dbReference type="ChEBI" id="CHEBI:43474"/>
        <dbReference type="ChEBI" id="CHEBI:57972"/>
        <dbReference type="ChEBI" id="CHEBI:70757"/>
        <dbReference type="ChEBI" id="CHEBI:83898"/>
        <dbReference type="ChEBI" id="CHEBI:456216"/>
        <dbReference type="EC" id="6.3.2.8"/>
    </reaction>
</comment>
<comment type="pathway">
    <text evidence="1">Cell wall biogenesis; peptidoglycan biosynthesis.</text>
</comment>
<comment type="subcellular location">
    <subcellularLocation>
        <location evidence="1">Cytoplasm</location>
    </subcellularLocation>
</comment>
<comment type="similarity">
    <text evidence="1">Belongs to the MurCDEF family.</text>
</comment>
<protein>
    <recommendedName>
        <fullName evidence="1">UDP-N-acetylmuramate--L-alanine ligase</fullName>
        <ecNumber evidence="1">6.3.2.8</ecNumber>
    </recommendedName>
    <alternativeName>
        <fullName evidence="1">UDP-N-acetylmuramoyl-L-alanine synthetase</fullName>
    </alternativeName>
</protein>
<organism>
    <name type="scientific">Enterococcus faecalis (strain ATCC 700802 / V583)</name>
    <dbReference type="NCBI Taxonomy" id="226185"/>
    <lineage>
        <taxon>Bacteria</taxon>
        <taxon>Bacillati</taxon>
        <taxon>Bacillota</taxon>
        <taxon>Bacilli</taxon>
        <taxon>Lactobacillales</taxon>
        <taxon>Enterococcaceae</taxon>
        <taxon>Enterococcus</taxon>
    </lineage>
</organism>
<accession>Q833N6</accession>
<reference key="1">
    <citation type="journal article" date="2003" name="Science">
        <title>Role of mobile DNA in the evolution of vancomycin-resistant Enterococcus faecalis.</title>
        <authorList>
            <person name="Paulsen I.T."/>
            <person name="Banerjei L."/>
            <person name="Myers G.S.A."/>
            <person name="Nelson K.E."/>
            <person name="Seshadri R."/>
            <person name="Read T.D."/>
            <person name="Fouts D.E."/>
            <person name="Eisen J.A."/>
            <person name="Gill S.R."/>
            <person name="Heidelberg J.F."/>
            <person name="Tettelin H."/>
            <person name="Dodson R.J."/>
            <person name="Umayam L.A."/>
            <person name="Brinkac L.M."/>
            <person name="Beanan M.J."/>
            <person name="Daugherty S.C."/>
            <person name="DeBoy R.T."/>
            <person name="Durkin S.A."/>
            <person name="Kolonay J.F."/>
            <person name="Madupu R."/>
            <person name="Nelson W.C."/>
            <person name="Vamathevan J.J."/>
            <person name="Tran B."/>
            <person name="Upton J."/>
            <person name="Hansen T."/>
            <person name="Shetty J."/>
            <person name="Khouri H.M."/>
            <person name="Utterback T.R."/>
            <person name="Radune D."/>
            <person name="Ketchum K.A."/>
            <person name="Dougherty B.A."/>
            <person name="Fraser C.M."/>
        </authorList>
    </citation>
    <scope>NUCLEOTIDE SEQUENCE [LARGE SCALE GENOMIC DNA]</scope>
    <source>
        <strain>ATCC 700802 / V583</strain>
    </source>
</reference>
<dbReference type="EC" id="6.3.2.8" evidence="1"/>
<dbReference type="EMBL" id="AE016830">
    <property type="protein sequence ID" value="AAO81660.1"/>
    <property type="molecule type" value="Genomic_DNA"/>
</dbReference>
<dbReference type="RefSeq" id="NP_815590.1">
    <property type="nucleotide sequence ID" value="NC_004668.1"/>
</dbReference>
<dbReference type="RefSeq" id="WP_002357163.1">
    <property type="nucleotide sequence ID" value="NZ_KE136528.1"/>
</dbReference>
<dbReference type="SMR" id="Q833N6"/>
<dbReference type="STRING" id="226185.EF_1908"/>
<dbReference type="EnsemblBacteria" id="AAO81660">
    <property type="protein sequence ID" value="AAO81660"/>
    <property type="gene ID" value="EF_1908"/>
</dbReference>
<dbReference type="GeneID" id="60894152"/>
<dbReference type="KEGG" id="efa:EF1908"/>
<dbReference type="PATRIC" id="fig|226185.45.peg.1609"/>
<dbReference type="eggNOG" id="COG0773">
    <property type="taxonomic scope" value="Bacteria"/>
</dbReference>
<dbReference type="HOGENOM" id="CLU_028104_1_0_9"/>
<dbReference type="UniPathway" id="UPA00219"/>
<dbReference type="Proteomes" id="UP000001415">
    <property type="component" value="Chromosome"/>
</dbReference>
<dbReference type="GO" id="GO:0005737">
    <property type="term" value="C:cytoplasm"/>
    <property type="evidence" value="ECO:0007669"/>
    <property type="project" value="UniProtKB-SubCell"/>
</dbReference>
<dbReference type="GO" id="GO:0005524">
    <property type="term" value="F:ATP binding"/>
    <property type="evidence" value="ECO:0007669"/>
    <property type="project" value="UniProtKB-UniRule"/>
</dbReference>
<dbReference type="GO" id="GO:0008763">
    <property type="term" value="F:UDP-N-acetylmuramate-L-alanine ligase activity"/>
    <property type="evidence" value="ECO:0007669"/>
    <property type="project" value="UniProtKB-UniRule"/>
</dbReference>
<dbReference type="GO" id="GO:0051301">
    <property type="term" value="P:cell division"/>
    <property type="evidence" value="ECO:0007669"/>
    <property type="project" value="UniProtKB-KW"/>
</dbReference>
<dbReference type="GO" id="GO:0071555">
    <property type="term" value="P:cell wall organization"/>
    <property type="evidence" value="ECO:0007669"/>
    <property type="project" value="UniProtKB-KW"/>
</dbReference>
<dbReference type="GO" id="GO:0009252">
    <property type="term" value="P:peptidoglycan biosynthetic process"/>
    <property type="evidence" value="ECO:0007669"/>
    <property type="project" value="UniProtKB-UniRule"/>
</dbReference>
<dbReference type="GO" id="GO:0008360">
    <property type="term" value="P:regulation of cell shape"/>
    <property type="evidence" value="ECO:0007669"/>
    <property type="project" value="UniProtKB-KW"/>
</dbReference>
<dbReference type="Gene3D" id="3.90.190.20">
    <property type="entry name" value="Mur ligase, C-terminal domain"/>
    <property type="match status" value="1"/>
</dbReference>
<dbReference type="Gene3D" id="3.40.1190.10">
    <property type="entry name" value="Mur-like, catalytic domain"/>
    <property type="match status" value="1"/>
</dbReference>
<dbReference type="Gene3D" id="3.40.50.720">
    <property type="entry name" value="NAD(P)-binding Rossmann-like Domain"/>
    <property type="match status" value="1"/>
</dbReference>
<dbReference type="HAMAP" id="MF_00046">
    <property type="entry name" value="MurC"/>
    <property type="match status" value="1"/>
</dbReference>
<dbReference type="InterPro" id="IPR036565">
    <property type="entry name" value="Mur-like_cat_sf"/>
</dbReference>
<dbReference type="InterPro" id="IPR004101">
    <property type="entry name" value="Mur_ligase_C"/>
</dbReference>
<dbReference type="InterPro" id="IPR036615">
    <property type="entry name" value="Mur_ligase_C_dom_sf"/>
</dbReference>
<dbReference type="InterPro" id="IPR013221">
    <property type="entry name" value="Mur_ligase_cen"/>
</dbReference>
<dbReference type="InterPro" id="IPR000713">
    <property type="entry name" value="Mur_ligase_N"/>
</dbReference>
<dbReference type="InterPro" id="IPR050061">
    <property type="entry name" value="MurCDEF_pg_biosynth"/>
</dbReference>
<dbReference type="InterPro" id="IPR005758">
    <property type="entry name" value="UDP-N-AcMur_Ala_ligase_MurC"/>
</dbReference>
<dbReference type="NCBIfam" id="TIGR01082">
    <property type="entry name" value="murC"/>
    <property type="match status" value="1"/>
</dbReference>
<dbReference type="PANTHER" id="PTHR43445:SF3">
    <property type="entry name" value="UDP-N-ACETYLMURAMATE--L-ALANINE LIGASE"/>
    <property type="match status" value="1"/>
</dbReference>
<dbReference type="PANTHER" id="PTHR43445">
    <property type="entry name" value="UDP-N-ACETYLMURAMATE--L-ALANINE LIGASE-RELATED"/>
    <property type="match status" value="1"/>
</dbReference>
<dbReference type="Pfam" id="PF01225">
    <property type="entry name" value="Mur_ligase"/>
    <property type="match status" value="1"/>
</dbReference>
<dbReference type="Pfam" id="PF02875">
    <property type="entry name" value="Mur_ligase_C"/>
    <property type="match status" value="1"/>
</dbReference>
<dbReference type="Pfam" id="PF08245">
    <property type="entry name" value="Mur_ligase_M"/>
    <property type="match status" value="1"/>
</dbReference>
<dbReference type="SUPFAM" id="SSF51984">
    <property type="entry name" value="MurCD N-terminal domain"/>
    <property type="match status" value="1"/>
</dbReference>
<dbReference type="SUPFAM" id="SSF53623">
    <property type="entry name" value="MurD-like peptide ligases, catalytic domain"/>
    <property type="match status" value="1"/>
</dbReference>
<dbReference type="SUPFAM" id="SSF53244">
    <property type="entry name" value="MurD-like peptide ligases, peptide-binding domain"/>
    <property type="match status" value="1"/>
</dbReference>
<name>MURC_ENTFA</name>
<keyword id="KW-0067">ATP-binding</keyword>
<keyword id="KW-0131">Cell cycle</keyword>
<keyword id="KW-0132">Cell division</keyword>
<keyword id="KW-0133">Cell shape</keyword>
<keyword id="KW-0961">Cell wall biogenesis/degradation</keyword>
<keyword id="KW-0963">Cytoplasm</keyword>
<keyword id="KW-0436">Ligase</keyword>
<keyword id="KW-0547">Nucleotide-binding</keyword>
<keyword id="KW-0573">Peptidoglycan synthesis</keyword>
<keyword id="KW-1185">Reference proteome</keyword>
<sequence>MGNQENKLYHFVGIKGSGMSSLALVLHQKGYNVQGSDVEEYFFTQRDLEKSGVPILPFNADNIDKDMIVIAGNAFPDTHEEIARAIELGAEVIRYHDFIARFIEPYTSIAVTGSHGKTSTTGLLAHVLSGINPTSYLIGDGTGHGEPDADFFAFEACEYRRHFLAYSPDYAIMTNIDFDHPDYYKSIEDVFSAFQTMAHQVKKGIFAYGDDKYLRQLESEVPVYYYGVSEEDDIQARNIQRTTEGSSFDVYHKDDFVGHFVLPAFGHHNIMNALGVIAVAYFEKLDMQKVAEEMLSFKGVKRRFSEKKVSDMIIVDDYAHHPAEIKATIDGARQKYPDKEIIAVFQPHTFTRTIALMDEFAEALDLADEVFLCNIFGSARETQGEVRIEDLGEKIQKGGQVITEDNVSPLLDFENAVVVFMGAGDVQKFEQAYETLLSNTTRNVL</sequence>
<evidence type="ECO:0000255" key="1">
    <source>
        <dbReference type="HAMAP-Rule" id="MF_00046"/>
    </source>
</evidence>
<proteinExistence type="inferred from homology"/>
<gene>
    <name evidence="1" type="primary">murC</name>
    <name type="ordered locus">EF_1908</name>
</gene>